<comment type="function">
    <text evidence="1">Forms spikes that protrude from each vertex of the icosahedral capsid. Interacts with host receptor CXCAR to provide virion initial attachment to target cell. Fiber proteins are shed during virus entry, when virus is still at the cell surface (By similarity).</text>
</comment>
<comment type="subunit">
    <text evidence="1">Homotrimer. Interacts with host receptor CXCAR. Interacts (via N-terminal tail region) with pentons (By similarity).</text>
</comment>
<comment type="subcellular location">
    <subcellularLocation>
        <location evidence="1">Virion</location>
    </subcellularLocation>
    <subcellularLocation>
        <location evidence="1">Host nucleus</location>
    </subcellularLocation>
    <text evidence="1">Anchored to the pentons, protrudes from the virion surface.</text>
</comment>
<comment type="induction">
    <text>Expressed in the late phase of the viral replicative cycle.</text>
</comment>
<comment type="domain">
    <text evidence="1">The tail region anchors the fiber to penton base capsomers, whereas the shaft, built from several repeated motifs, allows the knob to protrude from the virion.</text>
</comment>
<comment type="miscellaneous">
    <text evidence="1">All late proteins expressed from the major late promoter are produced by alternative splicing and alternative polyadenylation of the same gene giving rise to non-overlapping ORFs. A leader sequence is present in the N-terminus of all these mRNAs and is recognized by the viral shutoff protein to provide expression although conventional translation via ribosome scanning from the cap has been shut off in the host cell (By similarity).</text>
</comment>
<comment type="similarity">
    <text evidence="2">Belongs to the adenoviridae fiber family.</text>
</comment>
<reference key="1">
    <citation type="journal article" date="1989" name="Virology">
        <title>Sequence characterization of the adenovirus 40 fiber gene.</title>
        <authorList>
            <person name="Kidd A.H."/>
            <person name="Erasmus M.J."/>
        </authorList>
    </citation>
    <scope>NUCLEOTIDE SEQUENCE [GENOMIC DNA]</scope>
</reference>
<reference key="2">
    <citation type="journal article" date="2005" name="J. Virol.">
        <title>Adenovirus receptors.</title>
        <authorList>
            <person name="Zhang Y."/>
            <person name="Bergelson J.M."/>
        </authorList>
    </citation>
    <scope>REVIEW</scope>
</reference>
<sequence>MKRARFEDDFNPVYPYEHYNPLDIPFITPPFASSNGLQEKPPGVLSLKYTDPLTTKNGALTLKLGTGLNIDKNGDLSSDASVEVSAPITKTNKIVGLNYTKPLALQNNALTLSYNAPFNVVNNNLALNMSQPVTINANNELSLLIDAPLNADTGTLRLRSDAPLGLVDKTLKVLFSSPLYLDNNFLTLAIERPLALSSNRAVALKYSPPLKIENENLTLSTGGPFTVSGGNLNLATSAPLSVQNNSLSLGVNPPFLITDSGLAMDLGDGLALGGSKLIINLGPGLQMSNGAITLALDAALPLQYKNNQLQLRIGSASALIMSGVTQTLNVNANTSKGLAIENNSLVVKLGNGLRFDSWGSIAVSPTTTTPTTLWTTADPSPNATFYESLDAKVWLVLVKCNGMVNGTISIKAQKGTLLKPTASFISFVMYFYSDGTWRKNYPVFDNEGILANSATWGYRQGQSANTNVSNAVEFMPSSKRYPNEKGSEVQNMALTYTFLQGDPNMAISFQSIYNHAIEGYSLKFTWRVRNNERFDIPCCSFSYVTEQ</sequence>
<feature type="chain" id="PRO_0000221799" description="Fiber protein 1">
    <location>
        <begin position="1"/>
        <end position="547"/>
    </location>
</feature>
<protein>
    <recommendedName>
        <fullName>Fiber protein 1</fullName>
        <shortName>SPIKE</shortName>
    </recommendedName>
</protein>
<accession>P18047</accession>
<evidence type="ECO:0000250" key="1"/>
<evidence type="ECO:0000305" key="2"/>
<name>SPIK1_ADE40</name>
<dbReference type="EMBL" id="M28822">
    <property type="protein sequence ID" value="AAA03234.1"/>
    <property type="molecule type" value="Unassigned_DNA"/>
</dbReference>
<dbReference type="EMBL" id="L19443">
    <property type="protein sequence ID" value="AAC13980.1"/>
    <property type="molecule type" value="Genomic_DNA"/>
</dbReference>
<dbReference type="PIR" id="B30336">
    <property type="entry name" value="ERADF4"/>
</dbReference>
<dbReference type="RefSeq" id="NP_040876.1">
    <property type="nucleotide sequence ID" value="NC_001454.1"/>
</dbReference>
<dbReference type="SMR" id="P18047"/>
<dbReference type="GeneID" id="2715916"/>
<dbReference type="KEGG" id="vg:2715916"/>
<dbReference type="Proteomes" id="UP000151954">
    <property type="component" value="Segment"/>
</dbReference>
<dbReference type="GO" id="GO:0042025">
    <property type="term" value="C:host cell nucleus"/>
    <property type="evidence" value="ECO:0007669"/>
    <property type="project" value="UniProtKB-SubCell"/>
</dbReference>
<dbReference type="GO" id="GO:0019028">
    <property type="term" value="C:viral capsid"/>
    <property type="evidence" value="ECO:0007669"/>
    <property type="project" value="UniProtKB-KW"/>
</dbReference>
<dbReference type="GO" id="GO:0098671">
    <property type="term" value="P:adhesion receptor-mediated virion attachment to host cell"/>
    <property type="evidence" value="ECO:0007669"/>
    <property type="project" value="UniProtKB-KW"/>
</dbReference>
<dbReference type="GO" id="GO:0007155">
    <property type="term" value="P:cell adhesion"/>
    <property type="evidence" value="ECO:0007669"/>
    <property type="project" value="InterPro"/>
</dbReference>
<dbReference type="GO" id="GO:0046718">
    <property type="term" value="P:symbiont entry into host cell"/>
    <property type="evidence" value="ECO:0007669"/>
    <property type="project" value="UniProtKB-KW"/>
</dbReference>
<dbReference type="Gene3D" id="6.20.10.20">
    <property type="match status" value="2"/>
</dbReference>
<dbReference type="Gene3D" id="2.60.90.10">
    <property type="entry name" value="Adenovirus pIV-related, attachment domain"/>
    <property type="match status" value="1"/>
</dbReference>
<dbReference type="Gene3D" id="2.10.25.20">
    <property type="entry name" value="reovirus attachment protein sigma1, domain 1"/>
    <property type="match status" value="2"/>
</dbReference>
<dbReference type="InterPro" id="IPR000931">
    <property type="entry name" value="Adeno_fibre"/>
</dbReference>
<dbReference type="InterPro" id="IPR000978">
    <property type="entry name" value="Adeno_fibre_knob"/>
</dbReference>
<dbReference type="InterPro" id="IPR000939">
    <property type="entry name" value="Adenobir_fibre_prot_rpt/shaft"/>
</dbReference>
<dbReference type="InterPro" id="IPR008982">
    <property type="entry name" value="Adenovirus_pIV-like_att"/>
</dbReference>
<dbReference type="InterPro" id="IPR009013">
    <property type="entry name" value="Attachment_protein_shaft_sf"/>
</dbReference>
<dbReference type="Pfam" id="PF00541">
    <property type="entry name" value="Adeno_knob"/>
    <property type="match status" value="1"/>
</dbReference>
<dbReference type="Pfam" id="PF00608">
    <property type="entry name" value="Adeno_shaft"/>
    <property type="match status" value="7"/>
</dbReference>
<dbReference type="PRINTS" id="PR00307">
    <property type="entry name" value="ADENOVSFIBRE"/>
</dbReference>
<dbReference type="SUPFAM" id="SSF51225">
    <property type="entry name" value="Fibre shaft of virus attachment proteins"/>
    <property type="match status" value="4"/>
</dbReference>
<dbReference type="SUPFAM" id="SSF49835">
    <property type="entry name" value="Virus attachment protein globular domain"/>
    <property type="match status" value="1"/>
</dbReference>
<organism>
    <name type="scientific">Human adenovirus F serotype 40</name>
    <name type="common">HAdV-40</name>
    <name type="synonym">Human adenovirus 40</name>
    <dbReference type="NCBI Taxonomy" id="28284"/>
    <lineage>
        <taxon>Viruses</taxon>
        <taxon>Varidnaviria</taxon>
        <taxon>Bamfordvirae</taxon>
        <taxon>Preplasmiviricota</taxon>
        <taxon>Tectiliviricetes</taxon>
        <taxon>Rowavirales</taxon>
        <taxon>Adenoviridae</taxon>
        <taxon>Mastadenovirus</taxon>
        <taxon>Human mastadenovirus F</taxon>
    </lineage>
</organism>
<proteinExistence type="evidence at transcript level"/>
<organismHost>
    <name type="scientific">Homo sapiens</name>
    <name type="common">Human</name>
    <dbReference type="NCBI Taxonomy" id="9606"/>
</organismHost>
<keyword id="KW-0167">Capsid protein</keyword>
<keyword id="KW-1048">Host nucleus</keyword>
<keyword id="KW-0945">Host-virus interaction</keyword>
<keyword id="KW-0426">Late protein</keyword>
<keyword id="KW-1185">Reference proteome</keyword>
<keyword id="KW-1233">Viral attachment to host adhesion receptor</keyword>
<keyword id="KW-1161">Viral attachment to host cell</keyword>
<keyword id="KW-0946">Virion</keyword>
<keyword id="KW-1160">Virus entry into host cell</keyword>